<accession>Q6J3N5</accession>
<feature type="chain" id="PRO_0000452212" description="Beta-carotene 4-ketolase 3">
    <location>
        <begin position="1"/>
        <end position="320"/>
    </location>
</feature>
<comment type="function">
    <text evidence="1 2 3">Involved in the biosynthesis of ketocarotenoids which are powerful anti-oxidative molecules (PubMed:16242201, PubMed:21398427, PubMed:22526507). Catalyzes the conversion of beta-carotene to canthaxanthin via echinenone (PubMed:16242201, PubMed:21398427, PubMed:22526507).</text>
</comment>
<comment type="catalytic activity">
    <reaction evidence="1 2 3">
        <text>echinenone + 2 AH2 + 2 O2 = canthaxanthin + 2 A + 3 H2O</text>
        <dbReference type="Rhea" id="RHEA:55664"/>
        <dbReference type="ChEBI" id="CHEBI:3362"/>
        <dbReference type="ChEBI" id="CHEBI:4746"/>
        <dbReference type="ChEBI" id="CHEBI:13193"/>
        <dbReference type="ChEBI" id="CHEBI:15377"/>
        <dbReference type="ChEBI" id="CHEBI:15379"/>
        <dbReference type="ChEBI" id="CHEBI:17499"/>
        <dbReference type="EC" id="1.14.99.63"/>
    </reaction>
    <physiologicalReaction direction="left-to-right" evidence="1 2 3">
        <dbReference type="Rhea" id="RHEA:55665"/>
    </physiologicalReaction>
</comment>
<comment type="catalytic activity">
    <reaction evidence="1 2 3">
        <text>all-trans-beta-carotene + 2 AH2 + 2 O2 = echinenone + 2 A + 3 H2O</text>
        <dbReference type="Rhea" id="RHEA:55660"/>
        <dbReference type="ChEBI" id="CHEBI:4746"/>
        <dbReference type="ChEBI" id="CHEBI:13193"/>
        <dbReference type="ChEBI" id="CHEBI:15377"/>
        <dbReference type="ChEBI" id="CHEBI:15379"/>
        <dbReference type="ChEBI" id="CHEBI:17499"/>
        <dbReference type="ChEBI" id="CHEBI:17579"/>
        <dbReference type="EC" id="1.14.99.63"/>
    </reaction>
    <physiologicalReaction direction="left-to-right" evidence="1 2 3">
        <dbReference type="Rhea" id="RHEA:55661"/>
    </physiologicalReaction>
</comment>
<comment type="pathway">
    <text evidence="6">Carotenoid biosynthesis.</text>
</comment>
<comment type="induction">
    <text evidence="1">Induced by salt stress.</text>
</comment>
<evidence type="ECO:0000269" key="1">
    <source>
    </source>
</evidence>
<evidence type="ECO:0000269" key="2">
    <source>
    </source>
</evidence>
<evidence type="ECO:0000269" key="3">
    <source>
    </source>
</evidence>
<evidence type="ECO:0000303" key="4">
    <source>
    </source>
</evidence>
<evidence type="ECO:0000303" key="5">
    <source>
    </source>
</evidence>
<evidence type="ECO:0000305" key="6"/>
<organism>
    <name type="scientific">Haematococcus lacustris</name>
    <name type="common">Green alga</name>
    <name type="synonym">Haematococcus pluvialis</name>
    <dbReference type="NCBI Taxonomy" id="44745"/>
    <lineage>
        <taxon>Eukaryota</taxon>
        <taxon>Viridiplantae</taxon>
        <taxon>Chlorophyta</taxon>
        <taxon>core chlorophytes</taxon>
        <taxon>Chlorophyceae</taxon>
        <taxon>CS clade</taxon>
        <taxon>Chlamydomonadales</taxon>
        <taxon>Haematococcaceae</taxon>
        <taxon>Haematococcus</taxon>
    </lineage>
</organism>
<dbReference type="EC" id="1.14.99.63" evidence="1 2 3"/>
<dbReference type="EMBL" id="AY603347">
    <property type="protein sequence ID" value="AAT35555.1"/>
    <property type="molecule type" value="mRNA"/>
</dbReference>
<dbReference type="GO" id="GO:0016020">
    <property type="term" value="C:membrane"/>
    <property type="evidence" value="ECO:0007669"/>
    <property type="project" value="TreeGrafter"/>
</dbReference>
<dbReference type="GO" id="GO:0016705">
    <property type="term" value="F:oxidoreductase activity, acting on paired donors, with incorporation or reduction of molecular oxygen"/>
    <property type="evidence" value="ECO:0000314"/>
    <property type="project" value="UniProtKB"/>
</dbReference>
<dbReference type="GO" id="GO:0016717">
    <property type="term" value="F:oxidoreductase activity, acting on paired donors, with oxidation of a pair of donors resulting in the reduction of molecular oxygen to two molecules of water"/>
    <property type="evidence" value="ECO:0007669"/>
    <property type="project" value="TreeGrafter"/>
</dbReference>
<dbReference type="GO" id="GO:0016117">
    <property type="term" value="P:carotenoid biosynthetic process"/>
    <property type="evidence" value="ECO:0000314"/>
    <property type="project" value="UniProtKB"/>
</dbReference>
<dbReference type="CDD" id="cd03513">
    <property type="entry name" value="CrtW_beta-carotene-ketolase"/>
    <property type="match status" value="1"/>
</dbReference>
<dbReference type="InterPro" id="IPR005804">
    <property type="entry name" value="FA_desaturase_dom"/>
</dbReference>
<dbReference type="InterPro" id="IPR012171">
    <property type="entry name" value="Fatty_acid_desaturase"/>
</dbReference>
<dbReference type="PANTHER" id="PTHR19353:SF19">
    <property type="entry name" value="DELTA(5) FATTY ACID DESATURASE C-RELATED"/>
    <property type="match status" value="1"/>
</dbReference>
<dbReference type="PANTHER" id="PTHR19353">
    <property type="entry name" value="FATTY ACID DESATURASE 2"/>
    <property type="match status" value="1"/>
</dbReference>
<dbReference type="Pfam" id="PF00487">
    <property type="entry name" value="FA_desaturase"/>
    <property type="match status" value="1"/>
</dbReference>
<keyword id="KW-0125">Carotenoid biosynthesis</keyword>
<keyword id="KW-0560">Oxidoreductase</keyword>
<proteinExistence type="evidence at protein level"/>
<reference key="1">
    <citation type="journal article" date="2006" name="J. Biotechnol.">
        <title>Stress-related differential expression of multiple beta-carotene ketolase genes in the unicellular green alga Haematococcus pluvialis.</title>
        <authorList>
            <person name="Huang J.C."/>
            <person name="Chen F."/>
            <person name="Sandmann G."/>
        </authorList>
    </citation>
    <scope>NUCLEOTIDE SEQUENCE [MRNA]</scope>
    <scope>FUNCTION</scope>
    <scope>CATALYTIC ACTIVITY</scope>
    <scope>INDUCTION BY SALT STRESS</scope>
    <source>
        <strain>NIES-144 / IAM C-392 / MKF-8</strain>
    </source>
</reference>
<reference key="2">
    <citation type="journal article" date="2011" name="J. Exp. Bot.">
        <title>Functional characterization of various algal carotenoid ketolases reveals that ketolating zeaxanthin efficiently is essential for high production of astaxanthin in transgenic Arabidopsis.</title>
        <authorList>
            <person name="Zhong Y.J."/>
            <person name="Huang J.C."/>
            <person name="Liu J."/>
            <person name="Li Y."/>
            <person name="Jiang Y."/>
            <person name="Xu Z.F."/>
            <person name="Sandmann G."/>
            <person name="Chen F."/>
        </authorList>
    </citation>
    <scope>FUNCTION</scope>
    <scope>CATALYTIC ACTIVITY</scope>
</reference>
<reference key="3">
    <citation type="journal article" date="2012" name="Planta">
        <title>Cloning and selection of carotenoid ketolase genes for the engineering of high-yield astaxanthin in plants.</title>
        <authorList>
            <person name="Huang J."/>
            <person name="Zhong Y."/>
            <person name="Sandmann G."/>
            <person name="Liu J."/>
            <person name="Chen F."/>
        </authorList>
    </citation>
    <scope>FUNCTION</scope>
    <scope>CATALYTIC ACTIVITY</scope>
</reference>
<sequence length="320" mass="35894">MHVASALMVEQKGSEAAASSPDVLRAWATQYHMPSESSDAARPALKHAYKPPASDAKGITMALTIIGTWTAVFLHAIFQIRLPTSMDQLHWLPVSEATAQLLGGSSSLLHIAAVFIVLEFLYTGLFITTHDAMHGTIALRNRQLNDLLGNICISLYAWFDYSMLHRKHWEHHNHTGEVGKDPDFHKGNPGLVPWFASFMSSYMSLWQFARLAWWAVVMQMLGAPMANLLVFMAAAPILSAFRLFYFGTYLPHKPGPGPAAGSQVMAWFRAKTSEASDVMSFLTCYHFDLHWEHHRWPFAPWWQLPHCRRLSGRGLVPALA</sequence>
<protein>
    <recommendedName>
        <fullName evidence="4">Beta-carotene 4-ketolase 3</fullName>
        <shortName evidence="5">HpBKT3</shortName>
        <ecNumber evidence="1 2 3">1.14.99.63</ecNumber>
    </recommendedName>
</protein>
<name>BKT3_HAELA</name>
<gene>
    <name evidence="4" type="primary">BKT3</name>
</gene>